<feature type="chain" id="PRO_0000165436" description="S-adenosylmethionine:tRNA ribosyltransferase-isomerase">
    <location>
        <begin position="1"/>
        <end position="345"/>
    </location>
</feature>
<keyword id="KW-0963">Cytoplasm</keyword>
<keyword id="KW-0671">Queuosine biosynthesis</keyword>
<keyword id="KW-1185">Reference proteome</keyword>
<keyword id="KW-0949">S-adenosyl-L-methionine</keyword>
<keyword id="KW-0808">Transferase</keyword>
<organism>
    <name type="scientific">Shewanella oneidensis (strain ATCC 700550 / JCM 31522 / CIP 106686 / LMG 19005 / NCIMB 14063 / MR-1)</name>
    <dbReference type="NCBI Taxonomy" id="211586"/>
    <lineage>
        <taxon>Bacteria</taxon>
        <taxon>Pseudomonadati</taxon>
        <taxon>Pseudomonadota</taxon>
        <taxon>Gammaproteobacteria</taxon>
        <taxon>Alteromonadales</taxon>
        <taxon>Shewanellaceae</taxon>
        <taxon>Shewanella</taxon>
    </lineage>
</organism>
<accession>Q8ECM2</accession>
<protein>
    <recommendedName>
        <fullName evidence="1">S-adenosylmethionine:tRNA ribosyltransferase-isomerase</fullName>
        <ecNumber evidence="1">2.4.99.17</ecNumber>
    </recommendedName>
    <alternativeName>
        <fullName evidence="1">Queuosine biosynthesis protein QueA</fullName>
    </alternativeName>
</protein>
<name>QUEA_SHEON</name>
<dbReference type="EC" id="2.4.99.17" evidence="1"/>
<dbReference type="EMBL" id="AE014299">
    <property type="protein sequence ID" value="AAN56120.1"/>
    <property type="molecule type" value="Genomic_DNA"/>
</dbReference>
<dbReference type="RefSeq" id="NP_718676.1">
    <property type="nucleotide sequence ID" value="NC_004347.2"/>
</dbReference>
<dbReference type="RefSeq" id="WP_011073010.1">
    <property type="nucleotide sequence ID" value="NC_004347.2"/>
</dbReference>
<dbReference type="SMR" id="Q8ECM2"/>
<dbReference type="STRING" id="211586.SO_3114"/>
<dbReference type="PaxDb" id="211586-SO_3114"/>
<dbReference type="KEGG" id="son:SO_3114"/>
<dbReference type="PATRIC" id="fig|211586.12.peg.3014"/>
<dbReference type="eggNOG" id="COG0809">
    <property type="taxonomic scope" value="Bacteria"/>
</dbReference>
<dbReference type="HOGENOM" id="CLU_039110_1_0_6"/>
<dbReference type="OrthoDB" id="9805933at2"/>
<dbReference type="PhylomeDB" id="Q8ECM2"/>
<dbReference type="BioCyc" id="SONE211586:G1GMP-2885-MONOMER"/>
<dbReference type="UniPathway" id="UPA00392"/>
<dbReference type="Proteomes" id="UP000008186">
    <property type="component" value="Chromosome"/>
</dbReference>
<dbReference type="GO" id="GO:0005737">
    <property type="term" value="C:cytoplasm"/>
    <property type="evidence" value="ECO:0007669"/>
    <property type="project" value="UniProtKB-SubCell"/>
</dbReference>
<dbReference type="GO" id="GO:0051075">
    <property type="term" value="F:S-adenosylmethionine:tRNA ribosyltransferase-isomerase activity"/>
    <property type="evidence" value="ECO:0000318"/>
    <property type="project" value="GO_Central"/>
</dbReference>
<dbReference type="GO" id="GO:0008616">
    <property type="term" value="P:queuosine biosynthetic process"/>
    <property type="evidence" value="ECO:0000318"/>
    <property type="project" value="GO_Central"/>
</dbReference>
<dbReference type="GO" id="GO:0002099">
    <property type="term" value="P:tRNA wobble guanine modification"/>
    <property type="evidence" value="ECO:0000318"/>
    <property type="project" value="GO_Central"/>
</dbReference>
<dbReference type="FunFam" id="2.40.10.240:FF:000001">
    <property type="entry name" value="S-adenosylmethionine:tRNA ribosyltransferase-isomerase"/>
    <property type="match status" value="1"/>
</dbReference>
<dbReference type="FunFam" id="3.40.1780.10:FF:000001">
    <property type="entry name" value="S-adenosylmethionine:tRNA ribosyltransferase-isomerase"/>
    <property type="match status" value="1"/>
</dbReference>
<dbReference type="Gene3D" id="2.40.10.240">
    <property type="entry name" value="QueA-like"/>
    <property type="match status" value="1"/>
</dbReference>
<dbReference type="Gene3D" id="3.40.1780.10">
    <property type="entry name" value="QueA-like"/>
    <property type="match status" value="1"/>
</dbReference>
<dbReference type="HAMAP" id="MF_00113">
    <property type="entry name" value="QueA"/>
    <property type="match status" value="1"/>
</dbReference>
<dbReference type="InterPro" id="IPR003699">
    <property type="entry name" value="QueA"/>
</dbReference>
<dbReference type="InterPro" id="IPR042118">
    <property type="entry name" value="QueA_dom1"/>
</dbReference>
<dbReference type="InterPro" id="IPR042119">
    <property type="entry name" value="QueA_dom2"/>
</dbReference>
<dbReference type="InterPro" id="IPR036100">
    <property type="entry name" value="QueA_sf"/>
</dbReference>
<dbReference type="NCBIfam" id="NF001140">
    <property type="entry name" value="PRK00147.1"/>
    <property type="match status" value="1"/>
</dbReference>
<dbReference type="NCBIfam" id="TIGR00113">
    <property type="entry name" value="queA"/>
    <property type="match status" value="1"/>
</dbReference>
<dbReference type="PANTHER" id="PTHR30307">
    <property type="entry name" value="S-ADENOSYLMETHIONINE:TRNA RIBOSYLTRANSFERASE-ISOMERASE"/>
    <property type="match status" value="1"/>
</dbReference>
<dbReference type="PANTHER" id="PTHR30307:SF0">
    <property type="entry name" value="S-ADENOSYLMETHIONINE:TRNA RIBOSYLTRANSFERASE-ISOMERASE"/>
    <property type="match status" value="1"/>
</dbReference>
<dbReference type="Pfam" id="PF02547">
    <property type="entry name" value="Queuosine_synth"/>
    <property type="match status" value="1"/>
</dbReference>
<dbReference type="SUPFAM" id="SSF111337">
    <property type="entry name" value="QueA-like"/>
    <property type="match status" value="1"/>
</dbReference>
<sequence length="345" mass="38216">MRVTDFSFDLPDELIARYPMAQRNASRLLTLDGNTGTLVDKQFTDLLGMINPGDLMVFNNTRVIPARLFGQKASGGKLEILVERMLDDKRILAHVRSSKSPKVDSIIHLDGGYEMKMMARHDALFELQLLSELSILEVLEAVGHMPLPPYIDRPDEDADKERYQTVYNQNPGAVAAPTAGLHFDDAMLEALKAKGVNIAFVTLHVGAGTFQPVRVDNVLEHKMHSEWANVPQDVVDLIARTKAAGNRVVAVGTTSVRSLESAARASAGQLNAFSGDTDIFIYPGYQFQVVDAMVTNFHLPESTLIMLVSAFAGYEHVMAAYQHAIKQKYRFFSYGDAMFVTKKAH</sequence>
<comment type="function">
    <text evidence="1">Transfers and isomerizes the ribose moiety from AdoMet to the 7-aminomethyl group of 7-deazaguanine (preQ1-tRNA) to give epoxyqueuosine (oQ-tRNA).</text>
</comment>
<comment type="catalytic activity">
    <reaction evidence="1">
        <text>7-aminomethyl-7-carbaguanosine(34) in tRNA + S-adenosyl-L-methionine = epoxyqueuosine(34) in tRNA + adenine + L-methionine + 2 H(+)</text>
        <dbReference type="Rhea" id="RHEA:32155"/>
        <dbReference type="Rhea" id="RHEA-COMP:10342"/>
        <dbReference type="Rhea" id="RHEA-COMP:18582"/>
        <dbReference type="ChEBI" id="CHEBI:15378"/>
        <dbReference type="ChEBI" id="CHEBI:16708"/>
        <dbReference type="ChEBI" id="CHEBI:57844"/>
        <dbReference type="ChEBI" id="CHEBI:59789"/>
        <dbReference type="ChEBI" id="CHEBI:82833"/>
        <dbReference type="ChEBI" id="CHEBI:194443"/>
        <dbReference type="EC" id="2.4.99.17"/>
    </reaction>
</comment>
<comment type="pathway">
    <text evidence="1">tRNA modification; tRNA-queuosine biosynthesis.</text>
</comment>
<comment type="subunit">
    <text evidence="1">Monomer.</text>
</comment>
<comment type="subcellular location">
    <subcellularLocation>
        <location evidence="1">Cytoplasm</location>
    </subcellularLocation>
</comment>
<comment type="similarity">
    <text evidence="1">Belongs to the QueA family.</text>
</comment>
<proteinExistence type="inferred from homology"/>
<reference key="1">
    <citation type="journal article" date="2002" name="Nat. Biotechnol.">
        <title>Genome sequence of the dissimilatory metal ion-reducing bacterium Shewanella oneidensis.</title>
        <authorList>
            <person name="Heidelberg J.F."/>
            <person name="Paulsen I.T."/>
            <person name="Nelson K.E."/>
            <person name="Gaidos E.J."/>
            <person name="Nelson W.C."/>
            <person name="Read T.D."/>
            <person name="Eisen J.A."/>
            <person name="Seshadri R."/>
            <person name="Ward N.L."/>
            <person name="Methe B.A."/>
            <person name="Clayton R.A."/>
            <person name="Meyer T."/>
            <person name="Tsapin A."/>
            <person name="Scott J."/>
            <person name="Beanan M.J."/>
            <person name="Brinkac L.M."/>
            <person name="Daugherty S.C."/>
            <person name="DeBoy R.T."/>
            <person name="Dodson R.J."/>
            <person name="Durkin A.S."/>
            <person name="Haft D.H."/>
            <person name="Kolonay J.F."/>
            <person name="Madupu R."/>
            <person name="Peterson J.D."/>
            <person name="Umayam L.A."/>
            <person name="White O."/>
            <person name="Wolf A.M."/>
            <person name="Vamathevan J.J."/>
            <person name="Weidman J.F."/>
            <person name="Impraim M."/>
            <person name="Lee K."/>
            <person name="Berry K.J."/>
            <person name="Lee C."/>
            <person name="Mueller J."/>
            <person name="Khouri H.M."/>
            <person name="Gill J."/>
            <person name="Utterback T.R."/>
            <person name="McDonald L.A."/>
            <person name="Feldblyum T.V."/>
            <person name="Smith H.O."/>
            <person name="Venter J.C."/>
            <person name="Nealson K.H."/>
            <person name="Fraser C.M."/>
        </authorList>
    </citation>
    <scope>NUCLEOTIDE SEQUENCE [LARGE SCALE GENOMIC DNA]</scope>
    <source>
        <strain>ATCC 700550 / JCM 31522 / CIP 106686 / LMG 19005 / NCIMB 14063 / MR-1</strain>
    </source>
</reference>
<gene>
    <name evidence="1" type="primary">queA</name>
    <name type="ordered locus">SO_3114</name>
</gene>
<evidence type="ECO:0000255" key="1">
    <source>
        <dbReference type="HAMAP-Rule" id="MF_00113"/>
    </source>
</evidence>